<protein>
    <recommendedName>
        <fullName>Uncharacterized protein HI_0233</fullName>
    </recommendedName>
</protein>
<accession>P43967</accession>
<reference key="1">
    <citation type="journal article" date="1995" name="Science">
        <title>Whole-genome random sequencing and assembly of Haemophilus influenzae Rd.</title>
        <authorList>
            <person name="Fleischmann R.D."/>
            <person name="Adams M.D."/>
            <person name="White O."/>
            <person name="Clayton R.A."/>
            <person name="Kirkness E.F."/>
            <person name="Kerlavage A.R."/>
            <person name="Bult C.J."/>
            <person name="Tomb J.-F."/>
            <person name="Dougherty B.A."/>
            <person name="Merrick J.M."/>
            <person name="McKenney K."/>
            <person name="Sutton G.G."/>
            <person name="FitzHugh W."/>
            <person name="Fields C.A."/>
            <person name="Gocayne J.D."/>
            <person name="Scott J.D."/>
            <person name="Shirley R."/>
            <person name="Liu L.-I."/>
            <person name="Glodek A."/>
            <person name="Kelley J.M."/>
            <person name="Weidman J.F."/>
            <person name="Phillips C.A."/>
            <person name="Spriggs T."/>
            <person name="Hedblom E."/>
            <person name="Cotton M.D."/>
            <person name="Utterback T.R."/>
            <person name="Hanna M.C."/>
            <person name="Nguyen D.T."/>
            <person name="Saudek D.M."/>
            <person name="Brandon R.C."/>
            <person name="Fine L.D."/>
            <person name="Fritchman J.L."/>
            <person name="Fuhrmann J.L."/>
            <person name="Geoghagen N.S.M."/>
            <person name="Gnehm C.L."/>
            <person name="McDonald L.A."/>
            <person name="Small K.V."/>
            <person name="Fraser C.M."/>
            <person name="Smith H.O."/>
            <person name="Venter J.C."/>
        </authorList>
    </citation>
    <scope>NUCLEOTIDE SEQUENCE [LARGE SCALE GENOMIC DNA]</scope>
    <source>
        <strain>ATCC 51907 / DSM 11121 / KW20 / Rd</strain>
    </source>
</reference>
<name>Y233_HAEIN</name>
<sequence>MLKRKTFLKKKANLQQSSLSRNLRLRRLKHRKQQQFSRHSLQFVVQEICC</sequence>
<feature type="chain" id="PRO_0000077900" description="Uncharacterized protein HI_0233">
    <location>
        <begin position="1"/>
        <end position="50"/>
    </location>
</feature>
<keyword id="KW-1185">Reference proteome</keyword>
<gene>
    <name type="ordered locus">HI_0233</name>
</gene>
<organism>
    <name type="scientific">Haemophilus influenzae (strain ATCC 51907 / DSM 11121 / KW20 / Rd)</name>
    <dbReference type="NCBI Taxonomy" id="71421"/>
    <lineage>
        <taxon>Bacteria</taxon>
        <taxon>Pseudomonadati</taxon>
        <taxon>Pseudomonadota</taxon>
        <taxon>Gammaproteobacteria</taxon>
        <taxon>Pasteurellales</taxon>
        <taxon>Pasteurellaceae</taxon>
        <taxon>Haemophilus</taxon>
    </lineage>
</organism>
<dbReference type="EMBL" id="L42023">
    <property type="protein sequence ID" value="AAC21903.1"/>
    <property type="molecule type" value="Genomic_DNA"/>
</dbReference>
<dbReference type="PIR" id="C64004">
    <property type="entry name" value="C64004"/>
</dbReference>
<dbReference type="SMR" id="P43967"/>
<dbReference type="STRING" id="71421.HI_0233"/>
<dbReference type="EnsemblBacteria" id="AAC21903">
    <property type="protein sequence ID" value="AAC21903"/>
    <property type="gene ID" value="HI_0233"/>
</dbReference>
<dbReference type="KEGG" id="hin:HI_0233"/>
<dbReference type="HOGENOM" id="CLU_214414_0_0_6"/>
<dbReference type="Proteomes" id="UP000000579">
    <property type="component" value="Chromosome"/>
</dbReference>
<proteinExistence type="predicted"/>